<proteinExistence type="inferred from homology"/>
<feature type="initiator methionine" description="Removed" evidence="1">
    <location>
        <position position="1"/>
    </location>
</feature>
<feature type="chain" id="PRO_0000113970" description="Transcription termination/antitermination protein NusG">
    <location>
        <begin position="2"/>
        <end position="182"/>
    </location>
</feature>
<feature type="domain" description="KOW" evidence="2">
    <location>
        <begin position="130"/>
        <end position="161"/>
    </location>
</feature>
<evidence type="ECO:0000250" key="1"/>
<evidence type="ECO:0000255" key="2">
    <source>
        <dbReference type="HAMAP-Rule" id="MF_00948"/>
    </source>
</evidence>
<sequence length="182" mass="20773">MSEAPKKRWYVVQAFSGFEGRVAQSLREHIKMHGMEEYFGEVLVPTEEVVEMRAGQRRKSERKFFPGYVLVQMIMNDESWHLVRSVPRVMGFIGGTSDRPAPISDKEADAILNRLEKASEAPRPRTMYEVGEVVRVNEGPFADFNGTVEEVDYEKSRLKVSVSIFGRATPVELEFGQVEKLD</sequence>
<reference key="1">
    <citation type="submission" date="2002-12" db="EMBL/GenBank/DDBJ databases">
        <title>Complete genome sequence of Vibrio vulnificus CMCP6.</title>
        <authorList>
            <person name="Rhee J.H."/>
            <person name="Kim S.Y."/>
            <person name="Chung S.S."/>
            <person name="Kim J.J."/>
            <person name="Moon Y.H."/>
            <person name="Jeong H."/>
            <person name="Choy H.E."/>
        </authorList>
    </citation>
    <scope>NUCLEOTIDE SEQUENCE [LARGE SCALE GENOMIC DNA]</scope>
    <source>
        <strain>CMCP6</strain>
    </source>
</reference>
<accession>Q8DD25</accession>
<keyword id="KW-0804">Transcription</keyword>
<keyword id="KW-0889">Transcription antitermination</keyword>
<keyword id="KW-0805">Transcription regulation</keyword>
<keyword id="KW-0806">Transcription termination</keyword>
<organism>
    <name type="scientific">Vibrio vulnificus (strain CMCP6)</name>
    <dbReference type="NCBI Taxonomy" id="216895"/>
    <lineage>
        <taxon>Bacteria</taxon>
        <taxon>Pseudomonadati</taxon>
        <taxon>Pseudomonadota</taxon>
        <taxon>Gammaproteobacteria</taxon>
        <taxon>Vibrionales</taxon>
        <taxon>Vibrionaceae</taxon>
        <taxon>Vibrio</taxon>
    </lineage>
</organism>
<name>NUSG_VIBVU</name>
<protein>
    <recommendedName>
        <fullName evidence="2">Transcription termination/antitermination protein NusG</fullName>
    </recommendedName>
</protein>
<dbReference type="EMBL" id="AE016795">
    <property type="protein sequence ID" value="AAO09666.1"/>
    <property type="molecule type" value="Genomic_DNA"/>
</dbReference>
<dbReference type="RefSeq" id="WP_011079196.1">
    <property type="nucleotide sequence ID" value="NC_004459.3"/>
</dbReference>
<dbReference type="SMR" id="Q8DD25"/>
<dbReference type="GeneID" id="93895473"/>
<dbReference type="KEGG" id="vvu:VV1_1206"/>
<dbReference type="HOGENOM" id="CLU_067287_1_0_6"/>
<dbReference type="Proteomes" id="UP000002275">
    <property type="component" value="Chromosome 1"/>
</dbReference>
<dbReference type="GO" id="GO:0005829">
    <property type="term" value="C:cytosol"/>
    <property type="evidence" value="ECO:0007669"/>
    <property type="project" value="TreeGrafter"/>
</dbReference>
<dbReference type="GO" id="GO:0006353">
    <property type="term" value="P:DNA-templated transcription termination"/>
    <property type="evidence" value="ECO:0007669"/>
    <property type="project" value="UniProtKB-UniRule"/>
</dbReference>
<dbReference type="GO" id="GO:0032784">
    <property type="term" value="P:regulation of DNA-templated transcription elongation"/>
    <property type="evidence" value="ECO:0007669"/>
    <property type="project" value="InterPro"/>
</dbReference>
<dbReference type="GO" id="GO:0031564">
    <property type="term" value="P:transcription antitermination"/>
    <property type="evidence" value="ECO:0007669"/>
    <property type="project" value="UniProtKB-UniRule"/>
</dbReference>
<dbReference type="GO" id="GO:0140673">
    <property type="term" value="P:transcription elongation-coupled chromatin remodeling"/>
    <property type="evidence" value="ECO:0007669"/>
    <property type="project" value="InterPro"/>
</dbReference>
<dbReference type="CDD" id="cd06091">
    <property type="entry name" value="KOW_NusG"/>
    <property type="match status" value="1"/>
</dbReference>
<dbReference type="CDD" id="cd09891">
    <property type="entry name" value="NGN_Bact_1"/>
    <property type="match status" value="1"/>
</dbReference>
<dbReference type="FunFam" id="2.30.30.30:FF:000002">
    <property type="entry name" value="Transcription termination/antitermination factor NusG"/>
    <property type="match status" value="1"/>
</dbReference>
<dbReference type="FunFam" id="3.30.70.940:FF:000001">
    <property type="entry name" value="Transcription termination/antitermination protein NusG"/>
    <property type="match status" value="1"/>
</dbReference>
<dbReference type="Gene3D" id="2.30.30.30">
    <property type="match status" value="1"/>
</dbReference>
<dbReference type="Gene3D" id="3.30.70.940">
    <property type="entry name" value="NusG, N-terminal domain"/>
    <property type="match status" value="1"/>
</dbReference>
<dbReference type="HAMAP" id="MF_00948">
    <property type="entry name" value="NusG"/>
    <property type="match status" value="1"/>
</dbReference>
<dbReference type="InterPro" id="IPR005824">
    <property type="entry name" value="KOW"/>
</dbReference>
<dbReference type="InterPro" id="IPR047050">
    <property type="entry name" value="NGN"/>
</dbReference>
<dbReference type="InterPro" id="IPR006645">
    <property type="entry name" value="NGN-like_dom"/>
</dbReference>
<dbReference type="InterPro" id="IPR036735">
    <property type="entry name" value="NGN_dom_sf"/>
</dbReference>
<dbReference type="InterPro" id="IPR043425">
    <property type="entry name" value="NusG-like"/>
</dbReference>
<dbReference type="InterPro" id="IPR014722">
    <property type="entry name" value="Rib_uL2_dom2"/>
</dbReference>
<dbReference type="InterPro" id="IPR001062">
    <property type="entry name" value="Transcrpt_antiterm_NusG"/>
</dbReference>
<dbReference type="InterPro" id="IPR015869">
    <property type="entry name" value="Transcrpt_antiterm_NusG_bac_CS"/>
</dbReference>
<dbReference type="InterPro" id="IPR008991">
    <property type="entry name" value="Translation_prot_SH3-like_sf"/>
</dbReference>
<dbReference type="NCBIfam" id="TIGR00922">
    <property type="entry name" value="nusG"/>
    <property type="match status" value="1"/>
</dbReference>
<dbReference type="PANTHER" id="PTHR30265">
    <property type="entry name" value="RHO-INTERACTING TRANSCRIPTION TERMINATION FACTOR NUSG"/>
    <property type="match status" value="1"/>
</dbReference>
<dbReference type="PANTHER" id="PTHR30265:SF2">
    <property type="entry name" value="TRANSCRIPTION TERMINATION_ANTITERMINATION PROTEIN NUSG"/>
    <property type="match status" value="1"/>
</dbReference>
<dbReference type="Pfam" id="PF00467">
    <property type="entry name" value="KOW"/>
    <property type="match status" value="1"/>
</dbReference>
<dbReference type="Pfam" id="PF02357">
    <property type="entry name" value="NusG"/>
    <property type="match status" value="1"/>
</dbReference>
<dbReference type="PRINTS" id="PR00338">
    <property type="entry name" value="NUSGTNSCPFCT"/>
</dbReference>
<dbReference type="SMART" id="SM00739">
    <property type="entry name" value="KOW"/>
    <property type="match status" value="1"/>
</dbReference>
<dbReference type="SMART" id="SM00738">
    <property type="entry name" value="NGN"/>
    <property type="match status" value="1"/>
</dbReference>
<dbReference type="SUPFAM" id="SSF82679">
    <property type="entry name" value="N-utilization substance G protein NusG, N-terminal domain"/>
    <property type="match status" value="1"/>
</dbReference>
<dbReference type="SUPFAM" id="SSF50104">
    <property type="entry name" value="Translation proteins SH3-like domain"/>
    <property type="match status" value="1"/>
</dbReference>
<dbReference type="PROSITE" id="PS01014">
    <property type="entry name" value="NUSG"/>
    <property type="match status" value="1"/>
</dbReference>
<comment type="function">
    <text evidence="2">Participates in transcription elongation, termination and antitermination.</text>
</comment>
<comment type="similarity">
    <text evidence="2">Belongs to the NusG family.</text>
</comment>
<gene>
    <name evidence="2" type="primary">nusG</name>
    <name type="ordered locus">VV1_1206</name>
</gene>